<name>NUOB_JANMA</name>
<protein>
    <recommendedName>
        <fullName evidence="2">NADH-quinone oxidoreductase subunit B</fullName>
        <ecNumber evidence="2">7.1.1.-</ecNumber>
    </recommendedName>
    <alternativeName>
        <fullName evidence="2">NADH dehydrogenase I subunit B</fullName>
    </alternativeName>
    <alternativeName>
        <fullName evidence="2">NDH-1 subunit B</fullName>
    </alternativeName>
</protein>
<sequence>MAIEGVLNEGFVTTTADKLINWTRTGSMWPMTFGLACCAVEMMHAGASRYDLDRFGVVFRPSPRQSDVMIVAGTLCNKMAPALRKVYDQMAEPRWVISMGSCANGGGYYHYSYSVVRGCDRIVPVDVYVPGCPPTAEALLYGIMQLQNKIRRTNTIAR</sequence>
<dbReference type="EC" id="7.1.1.-" evidence="2"/>
<dbReference type="EMBL" id="CP000269">
    <property type="protein sequence ID" value="ABR88665.1"/>
    <property type="molecule type" value="Genomic_DNA"/>
</dbReference>
<dbReference type="RefSeq" id="WP_012079319.1">
    <property type="nucleotide sequence ID" value="NC_009659.1"/>
</dbReference>
<dbReference type="SMR" id="A6SY06"/>
<dbReference type="STRING" id="375286.mma_1463"/>
<dbReference type="KEGG" id="mms:mma_1463"/>
<dbReference type="eggNOG" id="COG0377">
    <property type="taxonomic scope" value="Bacteria"/>
</dbReference>
<dbReference type="HOGENOM" id="CLU_055737_7_3_4"/>
<dbReference type="OrthoDB" id="9786737at2"/>
<dbReference type="Proteomes" id="UP000006388">
    <property type="component" value="Chromosome"/>
</dbReference>
<dbReference type="GO" id="GO:0005886">
    <property type="term" value="C:plasma membrane"/>
    <property type="evidence" value="ECO:0007669"/>
    <property type="project" value="UniProtKB-SubCell"/>
</dbReference>
<dbReference type="GO" id="GO:0045271">
    <property type="term" value="C:respiratory chain complex I"/>
    <property type="evidence" value="ECO:0007669"/>
    <property type="project" value="TreeGrafter"/>
</dbReference>
<dbReference type="GO" id="GO:0051539">
    <property type="term" value="F:4 iron, 4 sulfur cluster binding"/>
    <property type="evidence" value="ECO:0007669"/>
    <property type="project" value="UniProtKB-KW"/>
</dbReference>
<dbReference type="GO" id="GO:0005506">
    <property type="term" value="F:iron ion binding"/>
    <property type="evidence" value="ECO:0007669"/>
    <property type="project" value="UniProtKB-UniRule"/>
</dbReference>
<dbReference type="GO" id="GO:0008137">
    <property type="term" value="F:NADH dehydrogenase (ubiquinone) activity"/>
    <property type="evidence" value="ECO:0007669"/>
    <property type="project" value="InterPro"/>
</dbReference>
<dbReference type="GO" id="GO:0050136">
    <property type="term" value="F:NADH:ubiquinone reductase (non-electrogenic) activity"/>
    <property type="evidence" value="ECO:0007669"/>
    <property type="project" value="UniProtKB-UniRule"/>
</dbReference>
<dbReference type="GO" id="GO:0048038">
    <property type="term" value="F:quinone binding"/>
    <property type="evidence" value="ECO:0007669"/>
    <property type="project" value="UniProtKB-KW"/>
</dbReference>
<dbReference type="GO" id="GO:0009060">
    <property type="term" value="P:aerobic respiration"/>
    <property type="evidence" value="ECO:0007669"/>
    <property type="project" value="TreeGrafter"/>
</dbReference>
<dbReference type="GO" id="GO:0015990">
    <property type="term" value="P:electron transport coupled proton transport"/>
    <property type="evidence" value="ECO:0007669"/>
    <property type="project" value="TreeGrafter"/>
</dbReference>
<dbReference type="FunFam" id="3.40.50.12280:FF:000001">
    <property type="entry name" value="NADH-quinone oxidoreductase subunit B 2"/>
    <property type="match status" value="1"/>
</dbReference>
<dbReference type="Gene3D" id="3.40.50.12280">
    <property type="match status" value="1"/>
</dbReference>
<dbReference type="HAMAP" id="MF_01356">
    <property type="entry name" value="NDH1_NuoB"/>
    <property type="match status" value="1"/>
</dbReference>
<dbReference type="InterPro" id="IPR006137">
    <property type="entry name" value="NADH_UbQ_OxRdtase-like_20kDa"/>
</dbReference>
<dbReference type="InterPro" id="IPR006138">
    <property type="entry name" value="NADH_UQ_OxRdtase_20Kd_su"/>
</dbReference>
<dbReference type="NCBIfam" id="TIGR01957">
    <property type="entry name" value="nuoB_fam"/>
    <property type="match status" value="1"/>
</dbReference>
<dbReference type="NCBIfam" id="NF005012">
    <property type="entry name" value="PRK06411.1"/>
    <property type="match status" value="1"/>
</dbReference>
<dbReference type="PANTHER" id="PTHR11995">
    <property type="entry name" value="NADH DEHYDROGENASE"/>
    <property type="match status" value="1"/>
</dbReference>
<dbReference type="PANTHER" id="PTHR11995:SF14">
    <property type="entry name" value="NADH DEHYDROGENASE [UBIQUINONE] IRON-SULFUR PROTEIN 7, MITOCHONDRIAL"/>
    <property type="match status" value="1"/>
</dbReference>
<dbReference type="Pfam" id="PF01058">
    <property type="entry name" value="Oxidored_q6"/>
    <property type="match status" value="1"/>
</dbReference>
<dbReference type="SUPFAM" id="SSF56770">
    <property type="entry name" value="HydA/Nqo6-like"/>
    <property type="match status" value="1"/>
</dbReference>
<dbReference type="PROSITE" id="PS01150">
    <property type="entry name" value="COMPLEX1_20K"/>
    <property type="match status" value="1"/>
</dbReference>
<organism>
    <name type="scientific">Janthinobacterium sp. (strain Marseille)</name>
    <name type="common">Minibacterium massiliensis</name>
    <dbReference type="NCBI Taxonomy" id="375286"/>
    <lineage>
        <taxon>Bacteria</taxon>
        <taxon>Pseudomonadati</taxon>
        <taxon>Pseudomonadota</taxon>
        <taxon>Betaproteobacteria</taxon>
        <taxon>Burkholderiales</taxon>
        <taxon>Oxalobacteraceae</taxon>
        <taxon>Janthinobacterium</taxon>
    </lineage>
</organism>
<evidence type="ECO:0000250" key="1"/>
<evidence type="ECO:0000255" key="2">
    <source>
        <dbReference type="HAMAP-Rule" id="MF_01356"/>
    </source>
</evidence>
<reference key="1">
    <citation type="journal article" date="2007" name="PLoS Genet.">
        <title>Genome analysis of Minibacterium massiliensis highlights the convergent evolution of water-living bacteria.</title>
        <authorList>
            <person name="Audic S."/>
            <person name="Robert C."/>
            <person name="Campagna B."/>
            <person name="Parinello H."/>
            <person name="Claverie J.-M."/>
            <person name="Raoult D."/>
            <person name="Drancourt M."/>
        </authorList>
    </citation>
    <scope>NUCLEOTIDE SEQUENCE [LARGE SCALE GENOMIC DNA]</scope>
    <source>
        <strain>Marseille</strain>
    </source>
</reference>
<accession>A6SY06</accession>
<proteinExistence type="inferred from homology"/>
<feature type="chain" id="PRO_0000358415" description="NADH-quinone oxidoreductase subunit B">
    <location>
        <begin position="1"/>
        <end position="158"/>
    </location>
</feature>
<feature type="binding site" evidence="2">
    <location>
        <position position="37"/>
    </location>
    <ligand>
        <name>[4Fe-4S] cluster</name>
        <dbReference type="ChEBI" id="CHEBI:49883"/>
    </ligand>
</feature>
<feature type="binding site" evidence="2">
    <location>
        <position position="38"/>
    </location>
    <ligand>
        <name>[4Fe-4S] cluster</name>
        <dbReference type="ChEBI" id="CHEBI:49883"/>
    </ligand>
</feature>
<feature type="binding site" evidence="2">
    <location>
        <position position="102"/>
    </location>
    <ligand>
        <name>[4Fe-4S] cluster</name>
        <dbReference type="ChEBI" id="CHEBI:49883"/>
    </ligand>
</feature>
<feature type="binding site" evidence="2">
    <location>
        <position position="132"/>
    </location>
    <ligand>
        <name>[4Fe-4S] cluster</name>
        <dbReference type="ChEBI" id="CHEBI:49883"/>
    </ligand>
</feature>
<comment type="function">
    <text evidence="1">NDH-1 shuttles electrons from NADH, via FMN and iron-sulfur (Fe-S) centers, to quinones in the respiratory chain. Couples the redox reaction to proton translocation (for every two electrons transferred, four hydrogen ions are translocated across the cytoplasmic membrane), and thus conserves the redox energy in a proton gradient (By similarity).</text>
</comment>
<comment type="catalytic activity">
    <reaction evidence="2">
        <text>a quinone + NADH + 5 H(+)(in) = a quinol + NAD(+) + 4 H(+)(out)</text>
        <dbReference type="Rhea" id="RHEA:57888"/>
        <dbReference type="ChEBI" id="CHEBI:15378"/>
        <dbReference type="ChEBI" id="CHEBI:24646"/>
        <dbReference type="ChEBI" id="CHEBI:57540"/>
        <dbReference type="ChEBI" id="CHEBI:57945"/>
        <dbReference type="ChEBI" id="CHEBI:132124"/>
    </reaction>
</comment>
<comment type="cofactor">
    <cofactor evidence="2">
        <name>[4Fe-4S] cluster</name>
        <dbReference type="ChEBI" id="CHEBI:49883"/>
    </cofactor>
    <text evidence="2">Binds 1 [4Fe-4S] cluster.</text>
</comment>
<comment type="subunit">
    <text evidence="2">NDH-1 is composed of 14 different subunits. Subunits NuoB, C, D, E, F, and G constitute the peripheral sector of the complex.</text>
</comment>
<comment type="subcellular location">
    <subcellularLocation>
        <location evidence="2">Cell inner membrane</location>
        <topology evidence="2">Peripheral membrane protein</topology>
        <orientation evidence="2">Cytoplasmic side</orientation>
    </subcellularLocation>
</comment>
<comment type="similarity">
    <text evidence="2">Belongs to the complex I 20 kDa subunit family.</text>
</comment>
<keyword id="KW-0004">4Fe-4S</keyword>
<keyword id="KW-0997">Cell inner membrane</keyword>
<keyword id="KW-1003">Cell membrane</keyword>
<keyword id="KW-0408">Iron</keyword>
<keyword id="KW-0411">Iron-sulfur</keyword>
<keyword id="KW-0472">Membrane</keyword>
<keyword id="KW-0479">Metal-binding</keyword>
<keyword id="KW-0520">NAD</keyword>
<keyword id="KW-0874">Quinone</keyword>
<keyword id="KW-1278">Translocase</keyword>
<keyword id="KW-0813">Transport</keyword>
<keyword id="KW-0830">Ubiquinone</keyword>
<gene>
    <name evidence="2" type="primary">nuoB</name>
    <name type="ordered locus">mma_1463</name>
</gene>